<evidence type="ECO:0000250" key="1"/>
<evidence type="ECO:0000255" key="2"/>
<evidence type="ECO:0000255" key="3">
    <source>
        <dbReference type="PROSITE-ProRule" id="PRU00336"/>
    </source>
</evidence>
<evidence type="ECO:0000256" key="4">
    <source>
        <dbReference type="SAM" id="MobiDB-lite"/>
    </source>
</evidence>
<evidence type="ECO:0000269" key="5">
    <source>
    </source>
</evidence>
<evidence type="ECO:0000269" key="6">
    <source>
    </source>
</evidence>
<evidence type="ECO:0000305" key="7"/>
<dbReference type="EMBL" id="AC002304">
    <property type="protein sequence ID" value="AAF79316.1"/>
    <property type="status" value="ALT_SEQ"/>
    <property type="molecule type" value="Genomic_DNA"/>
</dbReference>
<dbReference type="EMBL" id="CP002684">
    <property type="protein sequence ID" value="AEE33316.1"/>
    <property type="molecule type" value="Genomic_DNA"/>
</dbReference>
<dbReference type="EMBL" id="AY072140">
    <property type="protein sequence ID" value="AAL59962.1"/>
    <property type="molecule type" value="mRNA"/>
</dbReference>
<dbReference type="EMBL" id="AY122975">
    <property type="protein sequence ID" value="AAM67508.1"/>
    <property type="molecule type" value="mRNA"/>
</dbReference>
<dbReference type="EMBL" id="AK221878">
    <property type="protein sequence ID" value="BAD94197.1"/>
    <property type="status" value="ALT_INIT"/>
    <property type="molecule type" value="mRNA"/>
</dbReference>
<dbReference type="RefSeq" id="NP_175986.2">
    <molecule id="Q8VYE2-1"/>
    <property type="nucleotide sequence ID" value="NM_104467.5"/>
</dbReference>
<dbReference type="SMR" id="Q8VYE2"/>
<dbReference type="FunCoup" id="Q8VYE2">
    <property type="interactions" value="3831"/>
</dbReference>
<dbReference type="STRING" id="3702.Q8VYE2"/>
<dbReference type="iPTMnet" id="Q8VYE2"/>
<dbReference type="SwissPalm" id="Q8VYE2"/>
<dbReference type="PaxDb" id="3702-AT1G55900.1"/>
<dbReference type="ProteomicsDB" id="232458">
    <molecule id="Q8VYE2-1"/>
</dbReference>
<dbReference type="EnsemblPlants" id="AT1G55900.1">
    <molecule id="Q8VYE2-1"/>
    <property type="protein sequence ID" value="AT1G55900.1"/>
    <property type="gene ID" value="AT1G55900"/>
</dbReference>
<dbReference type="GeneID" id="842040"/>
<dbReference type="Gramene" id="AT1G55900.1">
    <molecule id="Q8VYE2-1"/>
    <property type="protein sequence ID" value="AT1G55900.1"/>
    <property type="gene ID" value="AT1G55900"/>
</dbReference>
<dbReference type="KEGG" id="ath:AT1G55900"/>
<dbReference type="Araport" id="AT1G55900"/>
<dbReference type="TAIR" id="AT1G55900">
    <property type="gene designation" value="TIM50"/>
</dbReference>
<dbReference type="eggNOG" id="KOG2832">
    <property type="taxonomic scope" value="Eukaryota"/>
</dbReference>
<dbReference type="InParanoid" id="Q8VYE2"/>
<dbReference type="OMA" id="HKPADIR"/>
<dbReference type="PhylomeDB" id="Q8VYE2"/>
<dbReference type="PRO" id="PR:Q8VYE2"/>
<dbReference type="Proteomes" id="UP000006548">
    <property type="component" value="Chromosome 1"/>
</dbReference>
<dbReference type="ExpressionAtlas" id="Q8VYE2">
    <property type="expression patterns" value="baseline and differential"/>
</dbReference>
<dbReference type="GO" id="GO:0005743">
    <property type="term" value="C:mitochondrial inner membrane"/>
    <property type="evidence" value="ECO:0007005"/>
    <property type="project" value="TAIR"/>
</dbReference>
<dbReference type="GO" id="GO:0005739">
    <property type="term" value="C:mitochondrion"/>
    <property type="evidence" value="ECO:0007005"/>
    <property type="project" value="TAIR"/>
</dbReference>
<dbReference type="GO" id="GO:0005634">
    <property type="term" value="C:nucleus"/>
    <property type="evidence" value="ECO:0007005"/>
    <property type="project" value="TAIR"/>
</dbReference>
<dbReference type="GO" id="GO:0015031">
    <property type="term" value="P:protein transport"/>
    <property type="evidence" value="ECO:0007669"/>
    <property type="project" value="UniProtKB-KW"/>
</dbReference>
<dbReference type="CDD" id="cd07521">
    <property type="entry name" value="HAD_FCP1-like"/>
    <property type="match status" value="1"/>
</dbReference>
<dbReference type="FunFam" id="3.40.50.1000:FF:000019">
    <property type="entry name" value="Mitochondrial import inner membrane translocase subunit TIM50"/>
    <property type="match status" value="1"/>
</dbReference>
<dbReference type="Gene3D" id="3.40.50.1000">
    <property type="entry name" value="HAD superfamily/HAD-like"/>
    <property type="match status" value="1"/>
</dbReference>
<dbReference type="InterPro" id="IPR004274">
    <property type="entry name" value="FCP1_dom"/>
</dbReference>
<dbReference type="InterPro" id="IPR036412">
    <property type="entry name" value="HAD-like_sf"/>
</dbReference>
<dbReference type="InterPro" id="IPR023214">
    <property type="entry name" value="HAD_sf"/>
</dbReference>
<dbReference type="InterPro" id="IPR050365">
    <property type="entry name" value="TIM50"/>
</dbReference>
<dbReference type="PANTHER" id="PTHR12210">
    <property type="entry name" value="DULLARD PROTEIN PHOSPHATASE"/>
    <property type="match status" value="1"/>
</dbReference>
<dbReference type="Pfam" id="PF03031">
    <property type="entry name" value="NIF"/>
    <property type="match status" value="1"/>
</dbReference>
<dbReference type="SMART" id="SM00577">
    <property type="entry name" value="CPDc"/>
    <property type="match status" value="1"/>
</dbReference>
<dbReference type="SUPFAM" id="SSF56784">
    <property type="entry name" value="HAD-like"/>
    <property type="match status" value="1"/>
</dbReference>
<dbReference type="PROSITE" id="PS50969">
    <property type="entry name" value="FCP1"/>
    <property type="match status" value="1"/>
</dbReference>
<feature type="transit peptide" description="Mitochondrion" evidence="2">
    <location>
        <begin position="1"/>
        <end position="25"/>
    </location>
</feature>
<feature type="chain" id="PRO_0000043124" description="Mitochondrial import inner membrane translocase subunit TIM50">
    <location>
        <begin position="26"/>
        <end position="376"/>
    </location>
</feature>
<feature type="topological domain" description="Mitochondrial matrix" evidence="2">
    <location>
        <begin position="26"/>
        <end position="84"/>
    </location>
</feature>
<feature type="transmembrane region" description="Helical" evidence="2">
    <location>
        <begin position="85"/>
        <end position="107"/>
    </location>
</feature>
<feature type="topological domain" description="Mitochondrial intermembrane" evidence="2">
    <location>
        <begin position="108"/>
        <end position="376"/>
    </location>
</feature>
<feature type="domain" description="FCP1 homology" evidence="3">
    <location>
        <begin position="186"/>
        <end position="329"/>
    </location>
</feature>
<feature type="region of interest" description="Disordered" evidence="4">
    <location>
        <begin position="32"/>
        <end position="66"/>
    </location>
</feature>
<feature type="compositionally biased region" description="Polar residues" evidence="4">
    <location>
        <begin position="32"/>
        <end position="48"/>
    </location>
</feature>
<feature type="compositionally biased region" description="Pro residues" evidence="4">
    <location>
        <begin position="51"/>
        <end position="64"/>
    </location>
</feature>
<reference key="1">
    <citation type="journal article" date="2000" name="Nature">
        <title>Sequence and analysis of chromosome 1 of the plant Arabidopsis thaliana.</title>
        <authorList>
            <person name="Theologis A."/>
            <person name="Ecker J.R."/>
            <person name="Palm C.J."/>
            <person name="Federspiel N.A."/>
            <person name="Kaul S."/>
            <person name="White O."/>
            <person name="Alonso J."/>
            <person name="Altafi H."/>
            <person name="Araujo R."/>
            <person name="Bowman C.L."/>
            <person name="Brooks S.Y."/>
            <person name="Buehler E."/>
            <person name="Chan A."/>
            <person name="Chao Q."/>
            <person name="Chen H."/>
            <person name="Cheuk R.F."/>
            <person name="Chin C.W."/>
            <person name="Chung M.K."/>
            <person name="Conn L."/>
            <person name="Conway A.B."/>
            <person name="Conway A.R."/>
            <person name="Creasy T.H."/>
            <person name="Dewar K."/>
            <person name="Dunn P."/>
            <person name="Etgu P."/>
            <person name="Feldblyum T.V."/>
            <person name="Feng J.-D."/>
            <person name="Fong B."/>
            <person name="Fujii C.Y."/>
            <person name="Gill J.E."/>
            <person name="Goldsmith A.D."/>
            <person name="Haas B."/>
            <person name="Hansen N.F."/>
            <person name="Hughes B."/>
            <person name="Huizar L."/>
            <person name="Hunter J.L."/>
            <person name="Jenkins J."/>
            <person name="Johnson-Hopson C."/>
            <person name="Khan S."/>
            <person name="Khaykin E."/>
            <person name="Kim C.J."/>
            <person name="Koo H.L."/>
            <person name="Kremenetskaia I."/>
            <person name="Kurtz D.B."/>
            <person name="Kwan A."/>
            <person name="Lam B."/>
            <person name="Langin-Hooper S."/>
            <person name="Lee A."/>
            <person name="Lee J.M."/>
            <person name="Lenz C.A."/>
            <person name="Li J.H."/>
            <person name="Li Y.-P."/>
            <person name="Lin X."/>
            <person name="Liu S.X."/>
            <person name="Liu Z.A."/>
            <person name="Luros J.S."/>
            <person name="Maiti R."/>
            <person name="Marziali A."/>
            <person name="Militscher J."/>
            <person name="Miranda M."/>
            <person name="Nguyen M."/>
            <person name="Nierman W.C."/>
            <person name="Osborne B.I."/>
            <person name="Pai G."/>
            <person name="Peterson J."/>
            <person name="Pham P.K."/>
            <person name="Rizzo M."/>
            <person name="Rooney T."/>
            <person name="Rowley D."/>
            <person name="Sakano H."/>
            <person name="Salzberg S.L."/>
            <person name="Schwartz J.R."/>
            <person name="Shinn P."/>
            <person name="Southwick A.M."/>
            <person name="Sun H."/>
            <person name="Tallon L.J."/>
            <person name="Tambunga G."/>
            <person name="Toriumi M.J."/>
            <person name="Town C.D."/>
            <person name="Utterback T."/>
            <person name="Van Aken S."/>
            <person name="Vaysberg M."/>
            <person name="Vysotskaia V.S."/>
            <person name="Walker M."/>
            <person name="Wu D."/>
            <person name="Yu G."/>
            <person name="Fraser C.M."/>
            <person name="Venter J.C."/>
            <person name="Davis R.W."/>
        </authorList>
    </citation>
    <scope>NUCLEOTIDE SEQUENCE [LARGE SCALE GENOMIC DNA]</scope>
    <source>
        <strain>cv. Columbia</strain>
    </source>
</reference>
<reference key="2">
    <citation type="journal article" date="2017" name="Plant J.">
        <title>Araport11: a complete reannotation of the Arabidopsis thaliana reference genome.</title>
        <authorList>
            <person name="Cheng C.Y."/>
            <person name="Krishnakumar V."/>
            <person name="Chan A.P."/>
            <person name="Thibaud-Nissen F."/>
            <person name="Schobel S."/>
            <person name="Town C.D."/>
        </authorList>
    </citation>
    <scope>GENOME REANNOTATION</scope>
    <source>
        <strain>cv. Columbia</strain>
    </source>
</reference>
<reference key="3">
    <citation type="journal article" date="2003" name="Science">
        <title>Empirical analysis of transcriptional activity in the Arabidopsis genome.</title>
        <authorList>
            <person name="Yamada K."/>
            <person name="Lim J."/>
            <person name="Dale J.M."/>
            <person name="Chen H."/>
            <person name="Shinn P."/>
            <person name="Palm C.J."/>
            <person name="Southwick A.M."/>
            <person name="Wu H.C."/>
            <person name="Kim C.J."/>
            <person name="Nguyen M."/>
            <person name="Pham P.K."/>
            <person name="Cheuk R.F."/>
            <person name="Karlin-Newmann G."/>
            <person name="Liu S.X."/>
            <person name="Lam B."/>
            <person name="Sakano H."/>
            <person name="Wu T."/>
            <person name="Yu G."/>
            <person name="Miranda M."/>
            <person name="Quach H.L."/>
            <person name="Tripp M."/>
            <person name="Chang C.H."/>
            <person name="Lee J.M."/>
            <person name="Toriumi M.J."/>
            <person name="Chan M.M."/>
            <person name="Tang C.C."/>
            <person name="Onodera C.S."/>
            <person name="Deng J.M."/>
            <person name="Akiyama K."/>
            <person name="Ansari Y."/>
            <person name="Arakawa T."/>
            <person name="Banh J."/>
            <person name="Banno F."/>
            <person name="Bowser L."/>
            <person name="Brooks S.Y."/>
            <person name="Carninci P."/>
            <person name="Chao Q."/>
            <person name="Choy N."/>
            <person name="Enju A."/>
            <person name="Goldsmith A.D."/>
            <person name="Gurjal M."/>
            <person name="Hansen N.F."/>
            <person name="Hayashizaki Y."/>
            <person name="Johnson-Hopson C."/>
            <person name="Hsuan V.W."/>
            <person name="Iida K."/>
            <person name="Karnes M."/>
            <person name="Khan S."/>
            <person name="Koesema E."/>
            <person name="Ishida J."/>
            <person name="Jiang P.X."/>
            <person name="Jones T."/>
            <person name="Kawai J."/>
            <person name="Kamiya A."/>
            <person name="Meyers C."/>
            <person name="Nakajima M."/>
            <person name="Narusaka M."/>
            <person name="Seki M."/>
            <person name="Sakurai T."/>
            <person name="Satou M."/>
            <person name="Tamse R."/>
            <person name="Vaysberg M."/>
            <person name="Wallender E.K."/>
            <person name="Wong C."/>
            <person name="Yamamura Y."/>
            <person name="Yuan S."/>
            <person name="Shinozaki K."/>
            <person name="Davis R.W."/>
            <person name="Theologis A."/>
            <person name="Ecker J.R."/>
        </authorList>
    </citation>
    <scope>NUCLEOTIDE SEQUENCE [LARGE SCALE MRNA]</scope>
    <source>
        <strain>cv. Columbia</strain>
    </source>
</reference>
<reference key="4">
    <citation type="submission" date="2005-03" db="EMBL/GenBank/DDBJ databases">
        <title>Large-scale analysis of RIKEN Arabidopsis full-length (RAFL) cDNAs.</title>
        <authorList>
            <person name="Totoki Y."/>
            <person name="Seki M."/>
            <person name="Ishida J."/>
            <person name="Nakajima M."/>
            <person name="Enju A."/>
            <person name="Kamiya A."/>
            <person name="Narusaka M."/>
            <person name="Shin-i T."/>
            <person name="Nakagawa M."/>
            <person name="Sakamoto N."/>
            <person name="Oishi K."/>
            <person name="Kohara Y."/>
            <person name="Kobayashi M."/>
            <person name="Toyoda A."/>
            <person name="Sakaki Y."/>
            <person name="Sakurai T."/>
            <person name="Iida K."/>
            <person name="Akiyama K."/>
            <person name="Satou M."/>
            <person name="Toyoda T."/>
            <person name="Konagaya A."/>
            <person name="Carninci P."/>
            <person name="Kawai J."/>
            <person name="Hayashizaki Y."/>
            <person name="Shinozaki K."/>
        </authorList>
    </citation>
    <scope>NUCLEOTIDE SEQUENCE [LARGE SCALE MRNA] OF 233-376</scope>
    <source>
        <strain>cv. Columbia</strain>
    </source>
</reference>
<reference key="5">
    <citation type="journal article" date="2004" name="Plant Physiol.">
        <title>A transcriptomic and proteomic characterization of the Arabidopsis mitochondrial protein import apparatus and its response to mitochondrial dysfunction.</title>
        <authorList>
            <person name="Lister R."/>
            <person name="Chew O."/>
            <person name="Lee M.N."/>
            <person name="Heazlewood J.L."/>
            <person name="Clifton R."/>
            <person name="Parker K.L."/>
            <person name="Millar A.H."/>
            <person name="Whelan J."/>
        </authorList>
    </citation>
    <scope>IDENTIFICATION BY MASS SPECTROMETRY</scope>
    <scope>SUBCELLULAR LOCATION</scope>
    <scope>TISSUE SPECIFICITY</scope>
    <scope>INDUCTION</scope>
</reference>
<reference key="6">
    <citation type="journal article" date="2012" name="Plant Cell">
        <title>Dual location of the mitochondrial preprotein transporters B14.7 and Tim23-2 in complex I and the TIM17:23 complex in Arabidopsis links mitochondrial activity and biogenesis.</title>
        <authorList>
            <person name="Wang Y."/>
            <person name="Carrie C."/>
            <person name="Giraud E."/>
            <person name="Elhafez D."/>
            <person name="Narsai R."/>
            <person name="Duncan O."/>
            <person name="Whelan J."/>
            <person name="Murcha M.W."/>
        </authorList>
    </citation>
    <scope>INTERACTION WITH TIM23-2</scope>
</reference>
<sequence>MASIVLRSRLLPRLAKLRSRNLRCFSAEASSTNSTSRYSGVTSTQSMFSDFPPPNQPPPPPPPQVEAAAAAATGKERKGLKYLGYALLWALTGATAATGYASFAYTIDEVNEKTKAFRESATKTPVIKSSGIDVIDKYQTKLYSAAMTGSARAIDKYLELREIVEEQVKGFTEPLSEKLLPDLHPAEQHVFTLVLDLNETLLYTDWKRERGWRTFKRPGVDAFLEHLGKFYEIVVYSDQMEMYVLPVCEKLDPNGYIRYKLARGATKYENGKHYRDLSKLNRDPKKILFVSANAFESTLQPENSVPIKPYKLEADDTALVDLIPFLEYVARNSPADIRPVLASFERKDIAKEFIDRSIEYQKRKQGQLGQGRFWRR</sequence>
<comment type="function">
    <text evidence="1">Essential component of the TIM17:23 complex, a complex that mediates the translocation of transit peptide-containing proteins across the mitochondrial inner membrane.</text>
</comment>
<comment type="subunit">
    <text evidence="6">Component of the TIM17:23 complex at least composed of TIM23, TIM17 and TIM50. Interacts with TIM23-2.</text>
</comment>
<comment type="subcellular location">
    <subcellularLocation>
        <location evidence="5">Mitochondrion inner membrane</location>
        <topology evidence="5">Single-pass membrane protein</topology>
    </subcellularLocation>
</comment>
<comment type="alternative products">
    <event type="alternative splicing"/>
    <isoform>
        <id>Q8VYE2-1</id>
        <name>1</name>
        <sequence type="displayed"/>
    </isoform>
    <text>A number of isoforms are produced. According to EST sequences.</text>
</comment>
<comment type="tissue specificity">
    <text evidence="5">Expressed in young cotyledons, roots, flowers and leaves.</text>
</comment>
<comment type="induction">
    <text evidence="5">Up-regulated after antimycin A or rotenone treatments.</text>
</comment>
<comment type="similarity">
    <text evidence="7">Belongs to the TIM50 family.</text>
</comment>
<comment type="sequence caution" evidence="7">
    <conflict type="erroneous gene model prediction">
        <sequence resource="EMBL-CDS" id="AAF79316"/>
    </conflict>
</comment>
<comment type="sequence caution" evidence="7">
    <conflict type="erroneous initiation">
        <sequence resource="EMBL-CDS" id="BAD94197"/>
    </conflict>
    <text>Truncated N-terminus.</text>
</comment>
<accession>Q8VYE2</accession>
<accession>Q56X01</accession>
<accession>Q9LG22</accession>
<name>TIM50_ARATH</name>
<protein>
    <recommendedName>
        <fullName>Mitochondrial import inner membrane translocase subunit TIM50</fullName>
    </recommendedName>
    <alternativeName>
        <fullName>Protein EMBRYO DEFECTIVE 1860</fullName>
    </alternativeName>
</protein>
<gene>
    <name type="primary">TIM50</name>
    <name type="synonym">EMB1860</name>
    <name type="ordered locus">At1g55900</name>
    <name type="ORF">F14J16.15</name>
</gene>
<proteinExistence type="evidence at protein level"/>
<keyword id="KW-0025">Alternative splicing</keyword>
<keyword id="KW-0472">Membrane</keyword>
<keyword id="KW-0496">Mitochondrion</keyword>
<keyword id="KW-0999">Mitochondrion inner membrane</keyword>
<keyword id="KW-0653">Protein transport</keyword>
<keyword id="KW-1185">Reference proteome</keyword>
<keyword id="KW-0809">Transit peptide</keyword>
<keyword id="KW-0811">Translocation</keyword>
<keyword id="KW-0812">Transmembrane</keyword>
<keyword id="KW-1133">Transmembrane helix</keyword>
<keyword id="KW-0813">Transport</keyword>
<organism>
    <name type="scientific">Arabidopsis thaliana</name>
    <name type="common">Mouse-ear cress</name>
    <dbReference type="NCBI Taxonomy" id="3702"/>
    <lineage>
        <taxon>Eukaryota</taxon>
        <taxon>Viridiplantae</taxon>
        <taxon>Streptophyta</taxon>
        <taxon>Embryophyta</taxon>
        <taxon>Tracheophyta</taxon>
        <taxon>Spermatophyta</taxon>
        <taxon>Magnoliopsida</taxon>
        <taxon>eudicotyledons</taxon>
        <taxon>Gunneridae</taxon>
        <taxon>Pentapetalae</taxon>
        <taxon>rosids</taxon>
        <taxon>malvids</taxon>
        <taxon>Brassicales</taxon>
        <taxon>Brassicaceae</taxon>
        <taxon>Camelineae</taxon>
        <taxon>Arabidopsis</taxon>
    </lineage>
</organism>